<dbReference type="EMBL" id="AB035967">
    <property type="protein sequence ID" value="BAA96801.1"/>
    <property type="molecule type" value="mRNA"/>
</dbReference>
<dbReference type="EMBL" id="BC016072">
    <property type="protein sequence ID" value="AAH16072.1"/>
    <property type="molecule type" value="mRNA"/>
</dbReference>
<dbReference type="CCDS" id="CCDS20185.1"/>
<dbReference type="RefSeq" id="NP_598498.1">
    <property type="nucleotide sequence ID" value="NM_133737.2"/>
</dbReference>
<dbReference type="SMR" id="Q9JJK2"/>
<dbReference type="BioGRID" id="214964">
    <property type="interactions" value="7"/>
</dbReference>
<dbReference type="FunCoup" id="Q9JJK2">
    <property type="interactions" value="3210"/>
</dbReference>
<dbReference type="IntAct" id="Q9JJK2">
    <property type="interactions" value="2"/>
</dbReference>
<dbReference type="STRING" id="10090.ENSMUSP00000052146"/>
<dbReference type="ChEMBL" id="CHEMBL4802018"/>
<dbReference type="GlyGen" id="Q9JJK2">
    <property type="glycosylation" value="1 site, 1 N-linked glycan (1 site)"/>
</dbReference>
<dbReference type="iPTMnet" id="Q9JJK2"/>
<dbReference type="PhosphoSitePlus" id="Q9JJK2"/>
<dbReference type="SwissPalm" id="Q9JJK2"/>
<dbReference type="jPOST" id="Q9JJK2"/>
<dbReference type="PaxDb" id="10090-ENSMUSP00000052146"/>
<dbReference type="ProteomicsDB" id="290008"/>
<dbReference type="Pumba" id="Q9JJK2"/>
<dbReference type="Antibodypedia" id="13819">
    <property type="antibodies" value="221 antibodies from 20 providers"/>
</dbReference>
<dbReference type="DNASU" id="71835"/>
<dbReference type="Ensembl" id="ENSMUST00000050077.15">
    <property type="protein sequence ID" value="ENSMUSP00000052146.9"/>
    <property type="gene ID" value="ENSMUSG00000062190.13"/>
</dbReference>
<dbReference type="Ensembl" id="ENSMUST00000072954.8">
    <property type="protein sequence ID" value="ENSMUSP00000072723.2"/>
    <property type="gene ID" value="ENSMUSG00000062190.13"/>
</dbReference>
<dbReference type="GeneID" id="71835"/>
<dbReference type="KEGG" id="mmu:71835"/>
<dbReference type="UCSC" id="uc009ccn.2">
    <property type="organism name" value="mouse"/>
</dbReference>
<dbReference type="AGR" id="MGI:1919085"/>
<dbReference type="CTD" id="55915"/>
<dbReference type="MGI" id="MGI:1919085">
    <property type="gene designation" value="Lancl2"/>
</dbReference>
<dbReference type="VEuPathDB" id="HostDB:ENSMUSG00000062190"/>
<dbReference type="eggNOG" id="KOG2787">
    <property type="taxonomic scope" value="Eukaryota"/>
</dbReference>
<dbReference type="GeneTree" id="ENSGT00530000063186"/>
<dbReference type="HOGENOM" id="CLU_036244_0_0_1"/>
<dbReference type="InParanoid" id="Q9JJK2"/>
<dbReference type="OMA" id="LSLYFEW"/>
<dbReference type="OrthoDB" id="10257263at2759"/>
<dbReference type="PhylomeDB" id="Q9JJK2"/>
<dbReference type="TreeFam" id="TF300068"/>
<dbReference type="BioGRID-ORCS" id="71835">
    <property type="hits" value="3 hits in 78 CRISPR screens"/>
</dbReference>
<dbReference type="CD-CODE" id="CE726F99">
    <property type="entry name" value="Postsynaptic density"/>
</dbReference>
<dbReference type="ChiTaRS" id="Lancl2">
    <property type="organism name" value="mouse"/>
</dbReference>
<dbReference type="PRO" id="PR:Q9JJK2"/>
<dbReference type="Proteomes" id="UP000000589">
    <property type="component" value="Chromosome 6"/>
</dbReference>
<dbReference type="RNAct" id="Q9JJK2">
    <property type="molecule type" value="protein"/>
</dbReference>
<dbReference type="Bgee" id="ENSMUSG00000062190">
    <property type="expression patterns" value="Expressed in spermatocyte and 265 other cell types or tissues"/>
</dbReference>
<dbReference type="ExpressionAtlas" id="Q9JJK2">
    <property type="expression patterns" value="baseline and differential"/>
</dbReference>
<dbReference type="GO" id="GO:0030864">
    <property type="term" value="C:cortical actin cytoskeleton"/>
    <property type="evidence" value="ECO:0007669"/>
    <property type="project" value="Ensembl"/>
</dbReference>
<dbReference type="GO" id="GO:0005829">
    <property type="term" value="C:cytosol"/>
    <property type="evidence" value="ECO:0000250"/>
    <property type="project" value="UniProtKB"/>
</dbReference>
<dbReference type="GO" id="GO:0005654">
    <property type="term" value="C:nucleoplasm"/>
    <property type="evidence" value="ECO:0007669"/>
    <property type="project" value="Ensembl"/>
</dbReference>
<dbReference type="GO" id="GO:0005634">
    <property type="term" value="C:nucleus"/>
    <property type="evidence" value="ECO:0000250"/>
    <property type="project" value="UniProtKB"/>
</dbReference>
<dbReference type="GO" id="GO:0005886">
    <property type="term" value="C:plasma membrane"/>
    <property type="evidence" value="ECO:0000250"/>
    <property type="project" value="UniProtKB"/>
</dbReference>
<dbReference type="GO" id="GO:0032266">
    <property type="term" value="F:phosphatidylinositol-3-phosphate binding"/>
    <property type="evidence" value="ECO:0007669"/>
    <property type="project" value="Ensembl"/>
</dbReference>
<dbReference type="GO" id="GO:0070273">
    <property type="term" value="F:phosphatidylinositol-4-phosphate binding"/>
    <property type="evidence" value="ECO:0007669"/>
    <property type="project" value="Ensembl"/>
</dbReference>
<dbReference type="GO" id="GO:0010314">
    <property type="term" value="F:phosphatidylinositol-5-phosphate binding"/>
    <property type="evidence" value="ECO:0007669"/>
    <property type="project" value="Ensembl"/>
</dbReference>
<dbReference type="GO" id="GO:0005975">
    <property type="term" value="P:carbohydrate metabolic process"/>
    <property type="evidence" value="ECO:0007669"/>
    <property type="project" value="InterPro"/>
</dbReference>
<dbReference type="GO" id="GO:0045892">
    <property type="term" value="P:negative regulation of DNA-templated transcription"/>
    <property type="evidence" value="ECO:0000250"/>
    <property type="project" value="UniProtKB"/>
</dbReference>
<dbReference type="GO" id="GO:0031179">
    <property type="term" value="P:peptide modification"/>
    <property type="evidence" value="ECO:0007669"/>
    <property type="project" value="InterPro"/>
</dbReference>
<dbReference type="GO" id="GO:0009789">
    <property type="term" value="P:positive regulation of abscisic acid-activated signaling pathway"/>
    <property type="evidence" value="ECO:0007669"/>
    <property type="project" value="Ensembl"/>
</dbReference>
<dbReference type="CDD" id="cd04794">
    <property type="entry name" value="euk_LANCL"/>
    <property type="match status" value="1"/>
</dbReference>
<dbReference type="FunFam" id="1.50.10.10:FF:000022">
    <property type="entry name" value="LanC like 2"/>
    <property type="match status" value="1"/>
</dbReference>
<dbReference type="Gene3D" id="1.50.10.10">
    <property type="match status" value="1"/>
</dbReference>
<dbReference type="InterPro" id="IPR012341">
    <property type="entry name" value="6hp_glycosidase-like_sf"/>
</dbReference>
<dbReference type="InterPro" id="IPR007822">
    <property type="entry name" value="LANC-like"/>
</dbReference>
<dbReference type="InterPro" id="IPR020464">
    <property type="entry name" value="LanC-like_prot_euk"/>
</dbReference>
<dbReference type="PANTHER" id="PTHR12736">
    <property type="entry name" value="LANC-LIKE PROTEIN"/>
    <property type="match status" value="1"/>
</dbReference>
<dbReference type="PANTHER" id="PTHR12736:SF11">
    <property type="entry name" value="LANC-LIKE PROTEIN 2"/>
    <property type="match status" value="1"/>
</dbReference>
<dbReference type="Pfam" id="PF05147">
    <property type="entry name" value="LANC_like"/>
    <property type="match status" value="1"/>
</dbReference>
<dbReference type="PRINTS" id="PR01951">
    <property type="entry name" value="LANCEUKARYTE"/>
</dbReference>
<dbReference type="PRINTS" id="PR01950">
    <property type="entry name" value="LANCSUPER"/>
</dbReference>
<dbReference type="SMART" id="SM01260">
    <property type="entry name" value="LANC_like"/>
    <property type="match status" value="1"/>
</dbReference>
<dbReference type="SUPFAM" id="SSF158745">
    <property type="entry name" value="LanC-like"/>
    <property type="match status" value="1"/>
</dbReference>
<feature type="initiator methionine" description="Removed" evidence="2">
    <location>
        <position position="1"/>
    </location>
</feature>
<feature type="chain" id="PRO_0000191273" description="LanC-like protein 2">
    <location>
        <begin position="2"/>
        <end position="450"/>
    </location>
</feature>
<feature type="region of interest" description="Interaction with inositol phospholipids" evidence="1">
    <location>
        <begin position="2"/>
        <end position="14"/>
    </location>
</feature>
<feature type="modified residue" description="Phosphotyrosine" evidence="4">
    <location>
        <position position="198"/>
    </location>
</feature>
<feature type="lipid moiety-binding region" description="N-myristoyl glycine" evidence="1">
    <location>
        <position position="2"/>
    </location>
</feature>
<sequence length="450" mass="50777">MGETMSKRLKFHLGEAEMEERSFPNPFPDYEAAASAAGLAAGSAEETGRVCPLPTTEDPGLPFHPNGKIVPNFIKRIQTKIKDLLQQMEEGLKTADPHDCSAYTGWTGIALLYLQLYRVTGDQTYLLRSLDYVKRTLRNLSGRRVTFLCGDAGPLAVGAVIYHKLKSECESQECITKLLQMHRTIVCQESELPDELLYGRAGYLYALLYLNTEIGPGTVGETAIKEVVSAIIESGKSLSREERKSERCPLLYQWHRKQYVGAAHGMAGIYYMLMQPEAKVDQETLTEMVKPSIDYVRHKKFRSGNYPSSLSNETDRLVHWCHGAPGVIHVLLQAYQVFKEEKYLKEAMECSDVIWQRGLLRKGYGICHGTSGNGYSFLSLYRLTQDKKYLYRACKFAEWCLDYGAHGCRIPDRPYSLFEGMAGAVHFLSDILVPETARFPAFELGFLQKD</sequence>
<organism>
    <name type="scientific">Mus musculus</name>
    <name type="common">Mouse</name>
    <dbReference type="NCBI Taxonomy" id="10090"/>
    <lineage>
        <taxon>Eukaryota</taxon>
        <taxon>Metazoa</taxon>
        <taxon>Chordata</taxon>
        <taxon>Craniata</taxon>
        <taxon>Vertebrata</taxon>
        <taxon>Euteleostomi</taxon>
        <taxon>Mammalia</taxon>
        <taxon>Eutheria</taxon>
        <taxon>Euarchontoglires</taxon>
        <taxon>Glires</taxon>
        <taxon>Rodentia</taxon>
        <taxon>Myomorpha</taxon>
        <taxon>Muroidea</taxon>
        <taxon>Muridae</taxon>
        <taxon>Murinae</taxon>
        <taxon>Mus</taxon>
        <taxon>Mus</taxon>
    </lineage>
</organism>
<proteinExistence type="evidence at protein level"/>
<accession>Q9JJK2</accession>
<name>LANC2_MOUSE</name>
<evidence type="ECO:0000250" key="1"/>
<evidence type="ECO:0000250" key="2">
    <source>
        <dbReference type="UniProtKB" id="Q9NS86"/>
    </source>
</evidence>
<evidence type="ECO:0000305" key="3"/>
<evidence type="ECO:0007744" key="4">
    <source>
    </source>
</evidence>
<gene>
    <name type="primary">Lancl2</name>
    <name type="synonym">Tasp</name>
</gene>
<protein>
    <recommendedName>
        <fullName>LanC-like protein 2</fullName>
    </recommendedName>
    <alternativeName>
        <fullName>Testis-specific adriamycin sensitivity protein</fullName>
    </alternativeName>
</protein>
<comment type="function">
    <text evidence="2">Necessary for abscisic acid (ABA) binding on the cell membrane and activation of the ABA signaling pathway in granulocytes.</text>
</comment>
<comment type="subunit">
    <text evidence="2">Interacts with an array of inositol phospholipids such as phosphatidylinositol 3-phosphate (PI3P), phosphatidylinositol 4-phosphate (PI4P) and phosphatidylinositol 5-phosphate (PI5P). PIP-binding enhances membrane association.</text>
</comment>
<comment type="subcellular location">
    <subcellularLocation>
        <location evidence="2">Nucleus</location>
    </subcellularLocation>
    <subcellularLocation>
        <location evidence="2">Cytoplasm</location>
    </subcellularLocation>
    <subcellularLocation>
        <location evidence="2">Cell membrane</location>
    </subcellularLocation>
    <text evidence="2">Localizes to the juxta-nuclear vesicles. Associates with the cortical actin cytoskeleton. Cholesterol depletion by methyl-beta-cyclodextrin causes partial dissociation from the cell membrane in vitro and an enhanced cell detachment from the matrix in vivo.</text>
</comment>
<comment type="PTM">
    <text evidence="2">Myristoylated. Essential for membrane association.</text>
</comment>
<comment type="similarity">
    <text evidence="3">Belongs to the LanC-like protein family.</text>
</comment>
<keyword id="KW-1003">Cell membrane</keyword>
<keyword id="KW-0963">Cytoplasm</keyword>
<keyword id="KW-0449">Lipoprotein</keyword>
<keyword id="KW-0472">Membrane</keyword>
<keyword id="KW-0519">Myristate</keyword>
<keyword id="KW-0539">Nucleus</keyword>
<keyword id="KW-0597">Phosphoprotein</keyword>
<keyword id="KW-1185">Reference proteome</keyword>
<reference key="1">
    <citation type="submission" date="1999-12" db="EMBL/GenBank/DDBJ databases">
        <title>Isolation and identification of genes whose downregulation result in anticancer drug resistance.</title>
        <authorList>
            <person name="Sugimoto Y."/>
            <person name="Tsukahara S."/>
            <person name="Ishikawa E."/>
            <person name="Tsuruo T."/>
        </authorList>
    </citation>
    <scope>NUCLEOTIDE SEQUENCE [MRNA]</scope>
</reference>
<reference key="2">
    <citation type="journal article" date="2004" name="Genome Res.">
        <title>The status, quality, and expansion of the NIH full-length cDNA project: the Mammalian Gene Collection (MGC).</title>
        <authorList>
            <consortium name="The MGC Project Team"/>
        </authorList>
    </citation>
    <scope>NUCLEOTIDE SEQUENCE [LARGE SCALE MRNA]</scope>
    <source>
        <strain>C57BL/6J</strain>
        <tissue>Eye</tissue>
        <tissue>Retina</tissue>
    </source>
</reference>
<reference key="3">
    <citation type="journal article" date="2008" name="J. Proteome Res.">
        <title>Large-scale identification and evolution indexing of tyrosine phosphorylation sites from murine brain.</title>
        <authorList>
            <person name="Ballif B.A."/>
            <person name="Carey G.R."/>
            <person name="Sunyaev S.R."/>
            <person name="Gygi S.P."/>
        </authorList>
    </citation>
    <scope>PHOSPHORYLATION [LARGE SCALE ANALYSIS] AT TYR-198</scope>
    <scope>IDENTIFICATION BY MASS SPECTROMETRY [LARGE SCALE ANALYSIS]</scope>
    <source>
        <tissue>Brain</tissue>
    </source>
</reference>
<reference key="4">
    <citation type="journal article" date="2010" name="Cell">
        <title>A tissue-specific atlas of mouse protein phosphorylation and expression.</title>
        <authorList>
            <person name="Huttlin E.L."/>
            <person name="Jedrychowski M.P."/>
            <person name="Elias J.E."/>
            <person name="Goswami T."/>
            <person name="Rad R."/>
            <person name="Beausoleil S.A."/>
            <person name="Villen J."/>
            <person name="Haas W."/>
            <person name="Sowa M.E."/>
            <person name="Gygi S.P."/>
        </authorList>
    </citation>
    <scope>IDENTIFICATION BY MASS SPECTROMETRY [LARGE SCALE ANALYSIS]</scope>
    <source>
        <tissue>Brain</tissue>
        <tissue>Brown adipose tissue</tissue>
        <tissue>Heart</tissue>
        <tissue>Kidney</tissue>
        <tissue>Lung</tissue>
        <tissue>Spleen</tissue>
        <tissue>Testis</tissue>
    </source>
</reference>